<gene>
    <name type="primary">Fndc5</name>
    <name type="synonym">Frcp2</name>
    <name evidence="8" type="synonym">Pep</name>
</gene>
<dbReference type="EMBL" id="AJ401376">
    <property type="protein sequence ID" value="CAC82194.1"/>
    <property type="molecule type" value="mRNA"/>
</dbReference>
<dbReference type="EMBL" id="AK005096">
    <property type="protein sequence ID" value="BAB23815.1"/>
    <property type="molecule type" value="mRNA"/>
</dbReference>
<dbReference type="EMBL" id="AL606977">
    <property type="status" value="NOT_ANNOTATED_CDS"/>
    <property type="molecule type" value="Genomic_DNA"/>
</dbReference>
<dbReference type="EMBL" id="BC109183">
    <property type="protein sequence ID" value="AAI09184.1"/>
    <property type="molecule type" value="mRNA"/>
</dbReference>
<dbReference type="EMBL" id="BC109184">
    <property type="protein sequence ID" value="AAI09185.1"/>
    <property type="molecule type" value="mRNA"/>
</dbReference>
<dbReference type="CCDS" id="CCDS18683.1">
    <molecule id="Q8K4Z2-1"/>
</dbReference>
<dbReference type="RefSeq" id="NP_081678.1">
    <molecule id="Q8K4Z2-1"/>
    <property type="nucleotide sequence ID" value="NM_027402.5"/>
</dbReference>
<dbReference type="SMR" id="Q8K4Z2"/>
<dbReference type="BioGRID" id="239035">
    <property type="interactions" value="1440"/>
</dbReference>
<dbReference type="FunCoup" id="Q8K4Z2">
    <property type="interactions" value="333"/>
</dbReference>
<dbReference type="IntAct" id="Q8K4Z2">
    <property type="interactions" value="1"/>
</dbReference>
<dbReference type="MINT" id="Q8K4Z2"/>
<dbReference type="STRING" id="10090.ENSMUSP00000099660"/>
<dbReference type="GlyCosmos" id="Q8K4Z2">
    <property type="glycosylation" value="2 sites, No reported glycans"/>
</dbReference>
<dbReference type="GlyGen" id="Q8K4Z2">
    <property type="glycosylation" value="2 sites, 2 N-linked glycans (2 sites)"/>
</dbReference>
<dbReference type="iPTMnet" id="Q8K4Z2"/>
<dbReference type="PhosphoSitePlus" id="Q8K4Z2"/>
<dbReference type="PaxDb" id="10090-ENSMUSP00000099660"/>
<dbReference type="ProteomicsDB" id="271778"/>
<dbReference type="Antibodypedia" id="54866">
    <property type="antibodies" value="215 antibodies from 29 providers"/>
</dbReference>
<dbReference type="DNASU" id="384061"/>
<dbReference type="Ensembl" id="ENSMUST00000102600.4">
    <molecule id="Q8K4Z2-1"/>
    <property type="protein sequence ID" value="ENSMUSP00000099660.4"/>
    <property type="gene ID" value="ENSMUSG00000001334.11"/>
</dbReference>
<dbReference type="Ensembl" id="ENSMUST00000249630.1">
    <molecule id="Q8K4Z2-2"/>
    <property type="protein sequence ID" value="ENSMUSP00000159833.1"/>
    <property type="gene ID" value="ENSMUSG00000001334.11"/>
</dbReference>
<dbReference type="GeneID" id="384061"/>
<dbReference type="KEGG" id="mmu:384061"/>
<dbReference type="UCSC" id="uc008uwe.1">
    <molecule id="Q8K4Z2-2"/>
    <property type="organism name" value="mouse"/>
</dbReference>
<dbReference type="AGR" id="MGI:1917614"/>
<dbReference type="CTD" id="252995"/>
<dbReference type="MGI" id="MGI:1917614">
    <property type="gene designation" value="Fndc5"/>
</dbReference>
<dbReference type="VEuPathDB" id="HostDB:ENSMUSG00000001334"/>
<dbReference type="eggNOG" id="ENOG502QQCU">
    <property type="taxonomic scope" value="Eukaryota"/>
</dbReference>
<dbReference type="GeneTree" id="ENSGT00390000004923"/>
<dbReference type="HOGENOM" id="CLU_089166_1_0_1"/>
<dbReference type="InParanoid" id="Q8K4Z2"/>
<dbReference type="OMA" id="YFSCASL"/>
<dbReference type="OrthoDB" id="5843172at2759"/>
<dbReference type="PhylomeDB" id="Q8K4Z2"/>
<dbReference type="TreeFam" id="TF325415"/>
<dbReference type="BioGRID-ORCS" id="384061">
    <property type="hits" value="3 hits in 79 CRISPR screens"/>
</dbReference>
<dbReference type="ChiTaRS" id="Fndc5">
    <property type="organism name" value="mouse"/>
</dbReference>
<dbReference type="PRO" id="PR:Q8K4Z2"/>
<dbReference type="Proteomes" id="UP000000589">
    <property type="component" value="Chromosome 4"/>
</dbReference>
<dbReference type="RNAct" id="Q8K4Z2">
    <property type="molecule type" value="protein"/>
</dbReference>
<dbReference type="Bgee" id="ENSMUSG00000001334">
    <property type="expression patterns" value="Expressed in interventricular septum and 180 other cell types or tissues"/>
</dbReference>
<dbReference type="GO" id="GO:0005783">
    <property type="term" value="C:endoplasmic reticulum"/>
    <property type="evidence" value="ECO:0000314"/>
    <property type="project" value="UniProtKB"/>
</dbReference>
<dbReference type="GO" id="GO:0005576">
    <property type="term" value="C:extracellular region"/>
    <property type="evidence" value="ECO:0000314"/>
    <property type="project" value="UniProtKB"/>
</dbReference>
<dbReference type="GO" id="GO:0005778">
    <property type="term" value="C:peroxisomal membrane"/>
    <property type="evidence" value="ECO:0007669"/>
    <property type="project" value="UniProtKB-SubCell"/>
</dbReference>
<dbReference type="GO" id="GO:0005886">
    <property type="term" value="C:plasma membrane"/>
    <property type="evidence" value="ECO:0000314"/>
    <property type="project" value="UniProtKB"/>
</dbReference>
<dbReference type="GO" id="GO:0005179">
    <property type="term" value="F:hormone activity"/>
    <property type="evidence" value="ECO:0007669"/>
    <property type="project" value="UniProtKB-KW"/>
</dbReference>
<dbReference type="GO" id="GO:0090336">
    <property type="term" value="P:positive regulation of brown fat cell differentiation"/>
    <property type="evidence" value="ECO:0000314"/>
    <property type="project" value="UniProtKB"/>
</dbReference>
<dbReference type="GO" id="GO:0014850">
    <property type="term" value="P:response to muscle activity"/>
    <property type="evidence" value="ECO:0000314"/>
    <property type="project" value="UniProtKB"/>
</dbReference>
<dbReference type="CDD" id="cd00063">
    <property type="entry name" value="FN3"/>
    <property type="match status" value="1"/>
</dbReference>
<dbReference type="FunFam" id="2.60.40.10:FF:000117">
    <property type="entry name" value="Fibronectin type III domain containing 5"/>
    <property type="match status" value="1"/>
</dbReference>
<dbReference type="Gene3D" id="2.60.40.10">
    <property type="entry name" value="Immunoglobulins"/>
    <property type="match status" value="1"/>
</dbReference>
<dbReference type="InterPro" id="IPR003961">
    <property type="entry name" value="FN3_dom"/>
</dbReference>
<dbReference type="InterPro" id="IPR036116">
    <property type="entry name" value="FN3_sf"/>
</dbReference>
<dbReference type="InterPro" id="IPR052120">
    <property type="entry name" value="FNDC_type_III_4/5"/>
</dbReference>
<dbReference type="InterPro" id="IPR013783">
    <property type="entry name" value="Ig-like_fold"/>
</dbReference>
<dbReference type="PANTHER" id="PTHR14470">
    <property type="entry name" value="FIBRONECTIN TYPE III DOMAIN-CONTAINING PROTEIN"/>
    <property type="match status" value="1"/>
</dbReference>
<dbReference type="PANTHER" id="PTHR14470:SF1">
    <property type="entry name" value="FIBRONECTIN TYPE III DOMAIN-CONTAINING PROTEIN 5"/>
    <property type="match status" value="1"/>
</dbReference>
<dbReference type="Pfam" id="PF00041">
    <property type="entry name" value="fn3"/>
    <property type="match status" value="1"/>
</dbReference>
<dbReference type="SMART" id="SM00060">
    <property type="entry name" value="FN3"/>
    <property type="match status" value="1"/>
</dbReference>
<dbReference type="SUPFAM" id="SSF49265">
    <property type="entry name" value="Fibronectin type III"/>
    <property type="match status" value="1"/>
</dbReference>
<dbReference type="PROSITE" id="PS50853">
    <property type="entry name" value="FN3"/>
    <property type="match status" value="1"/>
</dbReference>
<feature type="chain" id="PRO_0000328972" description="Fibronectin type III domain-containing protein 5">
    <location>
        <begin position="1"/>
        <end position="240"/>
    </location>
</feature>
<feature type="chain" id="PRO_0000415858" description="Irisin">
    <location>
        <begin position="1"/>
        <end position="171"/>
    </location>
</feature>
<feature type="transmembrane region" description="Helical" evidence="2">
    <location>
        <begin position="181"/>
        <end position="201"/>
    </location>
</feature>
<feature type="domain" description="Fibronectin type-III" evidence="3">
    <location>
        <begin position="64"/>
        <end position="155"/>
    </location>
</feature>
<feature type="region of interest" description="Disordered" evidence="4">
    <location>
        <begin position="1"/>
        <end position="33"/>
    </location>
</feature>
<feature type="region of interest" description="Disordered" evidence="4">
    <location>
        <begin position="210"/>
        <end position="240"/>
    </location>
</feature>
<feature type="short sequence motif" description="Microbody targeting signal" evidence="2">
    <location>
        <begin position="238"/>
        <end position="240"/>
    </location>
</feature>
<feature type="compositionally biased region" description="Gly residues" evidence="4">
    <location>
        <begin position="1"/>
        <end position="10"/>
    </location>
</feature>
<feature type="compositionally biased region" description="Basic and acidic residues" evidence="4">
    <location>
        <begin position="11"/>
        <end position="24"/>
    </location>
</feature>
<feature type="compositionally biased region" description="Basic and acidic residues" evidence="4">
    <location>
        <begin position="210"/>
        <end position="221"/>
    </location>
</feature>
<feature type="compositionally biased region" description="Gly residues" evidence="4">
    <location>
        <begin position="231"/>
        <end position="240"/>
    </location>
</feature>
<feature type="site" description="Required for dimerization" evidence="1">
    <location>
        <position position="106"/>
    </location>
</feature>
<feature type="glycosylation site" description="N-linked (GlcNAc...) asparagine" evidence="11">
    <location>
        <position position="67"/>
    </location>
</feature>
<feature type="glycosylation site" description="N-linked (GlcNAc...) asparagine" evidence="11">
    <location>
        <position position="112"/>
    </location>
</feature>
<feature type="splice variant" id="VSP_062503" description="In isoform 2." evidence="10">
    <location>
        <begin position="1"/>
        <end position="31"/>
    </location>
</feature>
<feature type="sequence conflict" description="In Ref. 2; BAB23815." evidence="9" ref="2">
    <original>AL</original>
    <variation>VV</variation>
    <location>
        <begin position="44"/>
        <end position="45"/>
    </location>
</feature>
<feature type="sequence conflict" description="In Ref. 2; BAB23815." evidence="9" ref="2">
    <original>I</original>
    <variation>L</variation>
    <location>
        <position position="95"/>
    </location>
</feature>
<feature type="sequence conflict" description="In Ref. 2; BAB23815." evidence="9" ref="2">
    <original>E</original>
    <variation>A</variation>
    <location>
        <position position="155"/>
    </location>
</feature>
<feature type="sequence conflict" description="In Ref. 2; BAB23815." evidence="9" ref="2">
    <original>S</original>
    <variation>P</variation>
    <location>
        <position position="161"/>
    </location>
</feature>
<feature type="sequence conflict" description="In Ref. 2; BAB23815." evidence="9" ref="2">
    <original>V</original>
    <variation>C</variation>
    <location>
        <position position="189"/>
    </location>
</feature>
<feature type="sequence conflict" description="In Ref. 2; BAB23815." evidence="9" ref="2">
    <original>R</original>
    <variation>A</variation>
    <location>
        <position position="202"/>
    </location>
</feature>
<accession>Q8K4Z2</accession>
<accession>A0AA74KUW2</accession>
<accession>Q9DB97</accession>
<organism>
    <name type="scientific">Mus musculus</name>
    <name type="common">Mouse</name>
    <dbReference type="NCBI Taxonomy" id="10090"/>
    <lineage>
        <taxon>Eukaryota</taxon>
        <taxon>Metazoa</taxon>
        <taxon>Chordata</taxon>
        <taxon>Craniata</taxon>
        <taxon>Vertebrata</taxon>
        <taxon>Euteleostomi</taxon>
        <taxon>Mammalia</taxon>
        <taxon>Eutheria</taxon>
        <taxon>Euarchontoglires</taxon>
        <taxon>Glires</taxon>
        <taxon>Rodentia</taxon>
        <taxon>Myomorpha</taxon>
        <taxon>Muroidea</taxon>
        <taxon>Muridae</taxon>
        <taxon>Murinae</taxon>
        <taxon>Mus</taxon>
        <taxon>Mus</taxon>
    </lineage>
</organism>
<proteinExistence type="evidence at protein level"/>
<name>FNDC5_MOUSE</name>
<evidence type="ECO:0000250" key="1">
    <source>
        <dbReference type="UniProtKB" id="Q8NAU1"/>
    </source>
</evidence>
<evidence type="ECO:0000255" key="2"/>
<evidence type="ECO:0000255" key="3">
    <source>
        <dbReference type="PROSITE-ProRule" id="PRU00316"/>
    </source>
</evidence>
<evidence type="ECO:0000256" key="4">
    <source>
        <dbReference type="SAM" id="MobiDB-lite"/>
    </source>
</evidence>
<evidence type="ECO:0000269" key="5">
    <source>
    </source>
</evidence>
<evidence type="ECO:0000269" key="6">
    <source>
    </source>
</evidence>
<evidence type="ECO:0000269" key="7">
    <source>
    </source>
</evidence>
<evidence type="ECO:0000303" key="8">
    <source>
    </source>
</evidence>
<evidence type="ECO:0000305" key="9"/>
<evidence type="ECO:0000305" key="10">
    <source>
    </source>
</evidence>
<evidence type="ECO:0000305" key="11">
    <source>
    </source>
</evidence>
<protein>
    <recommendedName>
        <fullName>Fibronectin type III domain-containing protein 5</fullName>
    </recommendedName>
    <alternativeName>
        <fullName>Fibronectin type III repeat-containing protein 2</fullName>
    </alternativeName>
    <alternativeName>
        <fullName evidence="8">Peroxisomal protein</fullName>
        <shortName evidence="8">PeP</shortName>
    </alternativeName>
    <component>
        <recommendedName>
            <fullName>Irisin</fullName>
        </recommendedName>
    </component>
</protein>
<sequence length="240" mass="26468">MQAARGGAGRPGREGRGLERECERSPGPGVAMPPGPCAWPPRAALRLWLGCVCFALVQADSPSAPVNVTVRHLKANSAVVSWDVLEDEVVIGFAISQQKKDVRMLRFIQEVNTTTRSCALWDLEEDTEYIVHVQAISIQGQSPASEPVLFKTPREAEKMASKNKDEVTMKEMGRNQQLRTGEVLIIVVVLFMWAGVIALFCRQYDIIKDNEPNNNKEKTKSASETSTPEHQGGGLLRSKI</sequence>
<keyword id="KW-0877">Alternative promoter usage</keyword>
<keyword id="KW-1003">Cell membrane</keyword>
<keyword id="KW-0903">Direct protein sequencing</keyword>
<keyword id="KW-0325">Glycoprotein</keyword>
<keyword id="KW-0372">Hormone</keyword>
<keyword id="KW-0472">Membrane</keyword>
<keyword id="KW-0576">Peroxisome</keyword>
<keyword id="KW-1185">Reference proteome</keyword>
<keyword id="KW-0964">Secreted</keyword>
<keyword id="KW-0812">Transmembrane</keyword>
<keyword id="KW-1133">Transmembrane helix</keyword>
<comment type="function">
    <molecule>Irisin</molecule>
    <text evidence="7">Mediates beneficial effects of muscular exercise. Induces browning of white adipose tissue by stimulating UCP1 expression, at least in part, via the nuclear receptor PPARA.</text>
</comment>
<comment type="subunit">
    <molecule>Irisin</molecule>
    <text evidence="1">Dimer; may exist in other oligomeric forms.</text>
</comment>
<comment type="subcellular location">
    <molecule>Fibronectin type III domain-containing protein 5</molecule>
    <subcellularLocation>
        <location evidence="1">Cell membrane</location>
        <topology evidence="2">Single-pass membrane protein</topology>
    </subcellularLocation>
    <subcellularLocation>
        <location evidence="5">Peroxisome membrane</location>
        <topology evidence="2">Single-pass membrane protein</topology>
    </subcellularLocation>
    <text evidence="5">Imported into peroxisomes through the PEX5 receptor pathway.</text>
</comment>
<comment type="subcellular location">
    <molecule>Irisin</molecule>
    <subcellularLocation>
        <location evidence="7">Secreted</location>
    </subcellularLocation>
    <text evidence="7">Detected in plasma following endurance exercise.</text>
</comment>
<comment type="alternative products">
    <event type="alternative promoter"/>
    <isoform>
        <id>Q8K4Z2-2</id>
        <name>1</name>
        <sequence type="displayed"/>
    </isoform>
    <isoform>
        <id>Q8K4Z2-1</id>
        <name>2</name>
        <sequence type="described" ref="VSP_062503"/>
    </isoform>
</comment>
<comment type="tissue specificity">
    <text evidence="5 6">In adult, it is highly expressed in skeletal muscle, heart and brain.</text>
</comment>
<comment type="developmental stage">
    <text evidence="5">During embryonic development, it is detected almost exclusively in the skeletal muscle, and at lower level in brain. In skeletal muscle, it is induced after myoblast differentiation, when myotube formation is promoted.</text>
</comment>
<comment type="induction">
    <text evidence="7">Up-regulated by muscular exercise. This effect can be mediated, at least partly, by PPARGC1A.</text>
</comment>
<comment type="domain">
    <text evidence="1">Fibronectin type-III domain is capable of forming a continuous intersubunit beta-sheet dimer; dimerization may thereby play a role in cell-cell adhesion or signaling.</text>
</comment>
<comment type="PTM">
    <text evidence="7">The extracellular domain is cleaved and released from the cell membrane.</text>
</comment>
<comment type="PTM">
    <text evidence="7">N-Glycosylated.</text>
</comment>
<reference key="1">
    <citation type="journal article" date="2002" name="Dev. Dyn.">
        <title>Mouse PeP: a novel peroxisomal protein linked to myoblast differentiation and development.</title>
        <authorList>
            <person name="Ferrer-Martinez A."/>
            <person name="Ruiz-Lozano P."/>
            <person name="Chien K.R."/>
        </authorList>
    </citation>
    <scope>NUCLEOTIDE SEQUENCE [MRNA] (ISOFORM 2)</scope>
    <scope>SUBCELLULAR LOCATION</scope>
    <scope>TISSUE SPECIFICITY</scope>
    <scope>DEVELOPMENTAL STAGE</scope>
    <source>
        <strain>BALB/cJ</strain>
        <tissue>Heart</tissue>
    </source>
</reference>
<reference key="2">
    <citation type="journal article" date="2005" name="Science">
        <title>The transcriptional landscape of the mammalian genome.</title>
        <authorList>
            <person name="Carninci P."/>
            <person name="Kasukawa T."/>
            <person name="Katayama S."/>
            <person name="Gough J."/>
            <person name="Frith M.C."/>
            <person name="Maeda N."/>
            <person name="Oyama R."/>
            <person name="Ravasi T."/>
            <person name="Lenhard B."/>
            <person name="Wells C."/>
            <person name="Kodzius R."/>
            <person name="Shimokawa K."/>
            <person name="Bajic V.B."/>
            <person name="Brenner S.E."/>
            <person name="Batalov S."/>
            <person name="Forrest A.R."/>
            <person name="Zavolan M."/>
            <person name="Davis M.J."/>
            <person name="Wilming L.G."/>
            <person name="Aidinis V."/>
            <person name="Allen J.E."/>
            <person name="Ambesi-Impiombato A."/>
            <person name="Apweiler R."/>
            <person name="Aturaliya R.N."/>
            <person name="Bailey T.L."/>
            <person name="Bansal M."/>
            <person name="Baxter L."/>
            <person name="Beisel K.W."/>
            <person name="Bersano T."/>
            <person name="Bono H."/>
            <person name="Chalk A.M."/>
            <person name="Chiu K.P."/>
            <person name="Choudhary V."/>
            <person name="Christoffels A."/>
            <person name="Clutterbuck D.R."/>
            <person name="Crowe M.L."/>
            <person name="Dalla E."/>
            <person name="Dalrymple B.P."/>
            <person name="de Bono B."/>
            <person name="Della Gatta G."/>
            <person name="di Bernardo D."/>
            <person name="Down T."/>
            <person name="Engstrom P."/>
            <person name="Fagiolini M."/>
            <person name="Faulkner G."/>
            <person name="Fletcher C.F."/>
            <person name="Fukushima T."/>
            <person name="Furuno M."/>
            <person name="Futaki S."/>
            <person name="Gariboldi M."/>
            <person name="Georgii-Hemming P."/>
            <person name="Gingeras T.R."/>
            <person name="Gojobori T."/>
            <person name="Green R.E."/>
            <person name="Gustincich S."/>
            <person name="Harbers M."/>
            <person name="Hayashi Y."/>
            <person name="Hensch T.K."/>
            <person name="Hirokawa N."/>
            <person name="Hill D."/>
            <person name="Huminiecki L."/>
            <person name="Iacono M."/>
            <person name="Ikeo K."/>
            <person name="Iwama A."/>
            <person name="Ishikawa T."/>
            <person name="Jakt M."/>
            <person name="Kanapin A."/>
            <person name="Katoh M."/>
            <person name="Kawasawa Y."/>
            <person name="Kelso J."/>
            <person name="Kitamura H."/>
            <person name="Kitano H."/>
            <person name="Kollias G."/>
            <person name="Krishnan S.P."/>
            <person name="Kruger A."/>
            <person name="Kummerfeld S.K."/>
            <person name="Kurochkin I.V."/>
            <person name="Lareau L.F."/>
            <person name="Lazarevic D."/>
            <person name="Lipovich L."/>
            <person name="Liu J."/>
            <person name="Liuni S."/>
            <person name="McWilliam S."/>
            <person name="Madan Babu M."/>
            <person name="Madera M."/>
            <person name="Marchionni L."/>
            <person name="Matsuda H."/>
            <person name="Matsuzawa S."/>
            <person name="Miki H."/>
            <person name="Mignone F."/>
            <person name="Miyake S."/>
            <person name="Morris K."/>
            <person name="Mottagui-Tabar S."/>
            <person name="Mulder N."/>
            <person name="Nakano N."/>
            <person name="Nakauchi H."/>
            <person name="Ng P."/>
            <person name="Nilsson R."/>
            <person name="Nishiguchi S."/>
            <person name="Nishikawa S."/>
            <person name="Nori F."/>
            <person name="Ohara O."/>
            <person name="Okazaki Y."/>
            <person name="Orlando V."/>
            <person name="Pang K.C."/>
            <person name="Pavan W.J."/>
            <person name="Pavesi G."/>
            <person name="Pesole G."/>
            <person name="Petrovsky N."/>
            <person name="Piazza S."/>
            <person name="Reed J."/>
            <person name="Reid J.F."/>
            <person name="Ring B.Z."/>
            <person name="Ringwald M."/>
            <person name="Rost B."/>
            <person name="Ruan Y."/>
            <person name="Salzberg S.L."/>
            <person name="Sandelin A."/>
            <person name="Schneider C."/>
            <person name="Schoenbach C."/>
            <person name="Sekiguchi K."/>
            <person name="Semple C.A."/>
            <person name="Seno S."/>
            <person name="Sessa L."/>
            <person name="Sheng Y."/>
            <person name="Shibata Y."/>
            <person name="Shimada H."/>
            <person name="Shimada K."/>
            <person name="Silva D."/>
            <person name="Sinclair B."/>
            <person name="Sperling S."/>
            <person name="Stupka E."/>
            <person name="Sugiura K."/>
            <person name="Sultana R."/>
            <person name="Takenaka Y."/>
            <person name="Taki K."/>
            <person name="Tammoja K."/>
            <person name="Tan S.L."/>
            <person name="Tang S."/>
            <person name="Taylor M.S."/>
            <person name="Tegner J."/>
            <person name="Teichmann S.A."/>
            <person name="Ueda H.R."/>
            <person name="van Nimwegen E."/>
            <person name="Verardo R."/>
            <person name="Wei C.L."/>
            <person name="Yagi K."/>
            <person name="Yamanishi H."/>
            <person name="Zabarovsky E."/>
            <person name="Zhu S."/>
            <person name="Zimmer A."/>
            <person name="Hide W."/>
            <person name="Bult C."/>
            <person name="Grimmond S.M."/>
            <person name="Teasdale R.D."/>
            <person name="Liu E.T."/>
            <person name="Brusic V."/>
            <person name="Quackenbush J."/>
            <person name="Wahlestedt C."/>
            <person name="Mattick J.S."/>
            <person name="Hume D.A."/>
            <person name="Kai C."/>
            <person name="Sasaki D."/>
            <person name="Tomaru Y."/>
            <person name="Fukuda S."/>
            <person name="Kanamori-Katayama M."/>
            <person name="Suzuki M."/>
            <person name="Aoki J."/>
            <person name="Arakawa T."/>
            <person name="Iida J."/>
            <person name="Imamura K."/>
            <person name="Itoh M."/>
            <person name="Kato T."/>
            <person name="Kawaji H."/>
            <person name="Kawagashira N."/>
            <person name="Kawashima T."/>
            <person name="Kojima M."/>
            <person name="Kondo S."/>
            <person name="Konno H."/>
            <person name="Nakano K."/>
            <person name="Ninomiya N."/>
            <person name="Nishio T."/>
            <person name="Okada M."/>
            <person name="Plessy C."/>
            <person name="Shibata K."/>
            <person name="Shiraki T."/>
            <person name="Suzuki S."/>
            <person name="Tagami M."/>
            <person name="Waki K."/>
            <person name="Watahiki A."/>
            <person name="Okamura-Oho Y."/>
            <person name="Suzuki H."/>
            <person name="Kawai J."/>
            <person name="Hayashizaki Y."/>
        </authorList>
    </citation>
    <scope>NUCLEOTIDE SEQUENCE [LARGE SCALE MRNA] (ISOFORM 2)</scope>
    <source>
        <strain>C57BL/6J</strain>
        <tissue>Cerebellum</tissue>
    </source>
</reference>
<reference key="3">
    <citation type="journal article" date="2009" name="PLoS Biol.">
        <title>Lineage-specific biology revealed by a finished genome assembly of the mouse.</title>
        <authorList>
            <person name="Church D.M."/>
            <person name="Goodstadt L."/>
            <person name="Hillier L.W."/>
            <person name="Zody M.C."/>
            <person name="Goldstein S."/>
            <person name="She X."/>
            <person name="Bult C.J."/>
            <person name="Agarwala R."/>
            <person name="Cherry J.L."/>
            <person name="DiCuccio M."/>
            <person name="Hlavina W."/>
            <person name="Kapustin Y."/>
            <person name="Meric P."/>
            <person name="Maglott D."/>
            <person name="Birtle Z."/>
            <person name="Marques A.C."/>
            <person name="Graves T."/>
            <person name="Zhou S."/>
            <person name="Teague B."/>
            <person name="Potamousis K."/>
            <person name="Churas C."/>
            <person name="Place M."/>
            <person name="Herschleb J."/>
            <person name="Runnheim R."/>
            <person name="Forrest D."/>
            <person name="Amos-Landgraf J."/>
            <person name="Schwartz D.C."/>
            <person name="Cheng Z."/>
            <person name="Lindblad-Toh K."/>
            <person name="Eichler E.E."/>
            <person name="Ponting C.P."/>
        </authorList>
    </citation>
    <scope>NUCLEOTIDE SEQUENCE [LARGE SCALE GENOMIC DNA]</scope>
    <source>
        <strain>C57BL/6J</strain>
    </source>
</reference>
<reference key="4">
    <citation type="journal article" date="2004" name="Genome Res.">
        <title>The status, quality, and expansion of the NIH full-length cDNA project: the Mammalian Gene Collection (MGC).</title>
        <authorList>
            <consortium name="The MGC Project Team"/>
        </authorList>
    </citation>
    <scope>NUCLEOTIDE SEQUENCE [LARGE SCALE MRNA] (ISOFORM 2)</scope>
</reference>
<reference key="5">
    <citation type="journal article" date="2012" name="Nature">
        <title>A PGC1-alpha-dependent myokine that drives brown-fat-like development of white fat and thermogenesis.</title>
        <authorList>
            <person name="Bostrom P."/>
            <person name="Wu J."/>
            <person name="Jedrychowski M.P."/>
            <person name="Korde A."/>
            <person name="Ye L."/>
            <person name="Lo J.C."/>
            <person name="Rasbach K.A."/>
            <person name="Bostrom E.A."/>
            <person name="Choi J.H."/>
            <person name="Long J.Z."/>
            <person name="Kajimura S."/>
            <person name="Zingaretti M.C."/>
            <person name="Vind B.F."/>
            <person name="Tu H."/>
            <person name="Cinti S."/>
            <person name="Hojlund K."/>
            <person name="Gygi S.P."/>
            <person name="Spiegelman B.M."/>
        </authorList>
    </citation>
    <scope>PROTEIN SEQUENCE OF 164-171</scope>
    <scope>FUNCTION</scope>
    <scope>INDUCTION</scope>
    <scope>GLYCOSYLATION</scope>
    <scope>SUBCELLULAR LOCATION</scope>
    <scope>IDENTIFICATION BY MASS SPECTROMETRY</scope>
</reference>
<reference key="6">
    <citation type="journal article" date="2002" name="Gene">
        <title>Frcp1 and Frcp2, two novel fibronectin type III repeat containing genes.</title>
        <authorList>
            <person name="Teufel A."/>
            <person name="Malik N."/>
            <person name="Mukhopadhyay M."/>
            <person name="Westphal H."/>
        </authorList>
    </citation>
    <scope>TISSUE SPECIFICITY</scope>
</reference>
<reference key="7">
    <citation type="journal article" date="2010" name="Cell">
        <title>A tissue-specific atlas of mouse protein phosphorylation and expression.</title>
        <authorList>
            <person name="Huttlin E.L."/>
            <person name="Jedrychowski M.P."/>
            <person name="Elias J.E."/>
            <person name="Goswami T."/>
            <person name="Rad R."/>
            <person name="Beausoleil S.A."/>
            <person name="Villen J."/>
            <person name="Haas W."/>
            <person name="Sowa M.E."/>
            <person name="Gygi S.P."/>
        </authorList>
    </citation>
    <scope>IDENTIFICATION BY MASS SPECTROMETRY [LARGE SCALE ANALYSIS]</scope>
    <source>
        <tissue>Brain</tissue>
    </source>
</reference>
<reference key="8">
    <citation type="journal article" date="2024" name="Cell Metab.">
        <title>Fndc5 is translated from an upstream ATG start codon and cleaved to produce irisin myokine precursor protein in humans and mice.</title>
        <authorList>
            <person name="Witmer N.H."/>
            <person name="Linzer C.R."/>
            <person name="Boudreau R.L."/>
        </authorList>
    </citation>
    <scope>ALTERNATIVE PROMOTER USAGE (ISOFORM 1)</scope>
</reference>